<comment type="function">
    <text evidence="1">Phosphorylase is an important allosteric enzyme in carbohydrate metabolism. Enzymes from different sources differ in their regulatory mechanisms and in their natural substrates. However, all known phosphorylases share catalytic and structural properties (By similarity).</text>
</comment>
<comment type="catalytic activity">
    <reaction>
        <text>[(1-&gt;4)-alpha-D-glucosyl](n) + phosphate = [(1-&gt;4)-alpha-D-glucosyl](n-1) + alpha-D-glucose 1-phosphate</text>
        <dbReference type="Rhea" id="RHEA:41732"/>
        <dbReference type="Rhea" id="RHEA-COMP:9584"/>
        <dbReference type="Rhea" id="RHEA-COMP:9586"/>
        <dbReference type="ChEBI" id="CHEBI:15444"/>
        <dbReference type="ChEBI" id="CHEBI:43474"/>
        <dbReference type="ChEBI" id="CHEBI:58601"/>
        <dbReference type="EC" id="2.4.1.1"/>
    </reaction>
</comment>
<comment type="cofactor">
    <cofactor evidence="1">
        <name>pyridoxal 5'-phosphate</name>
        <dbReference type="ChEBI" id="CHEBI:597326"/>
    </cofactor>
</comment>
<comment type="similarity">
    <text evidence="2">Belongs to the glycogen phosphorylase family.</text>
</comment>
<keyword id="KW-0021">Allosteric enzyme</keyword>
<keyword id="KW-0119">Carbohydrate metabolism</keyword>
<keyword id="KW-0321">Glycogen metabolism</keyword>
<keyword id="KW-0328">Glycosyltransferase</keyword>
<keyword id="KW-0663">Pyridoxal phosphate</keyword>
<keyword id="KW-1185">Reference proteome</keyword>
<keyword id="KW-0808">Transferase</keyword>
<proteinExistence type="inferred from homology"/>
<reference key="1">
    <citation type="journal article" date="2003" name="Proc. Natl. Acad. Sci. U.S.A.">
        <title>The complete genome sequence of Mycobacterium bovis.</title>
        <authorList>
            <person name="Garnier T."/>
            <person name="Eiglmeier K."/>
            <person name="Camus J.-C."/>
            <person name="Medina N."/>
            <person name="Mansoor H."/>
            <person name="Pryor M."/>
            <person name="Duthoy S."/>
            <person name="Grondin S."/>
            <person name="Lacroix C."/>
            <person name="Monsempe C."/>
            <person name="Simon S."/>
            <person name="Harris B."/>
            <person name="Atkin R."/>
            <person name="Doggett J."/>
            <person name="Mayes R."/>
            <person name="Keating L."/>
            <person name="Wheeler P.R."/>
            <person name="Parkhill J."/>
            <person name="Barrell B.G."/>
            <person name="Cole S.T."/>
            <person name="Gordon S.V."/>
            <person name="Hewinson R.G."/>
        </authorList>
    </citation>
    <scope>NUCLEOTIDE SEQUENCE [LARGE SCALE GENOMIC DNA]</scope>
    <source>
        <strain>ATCC BAA-935 / AF2122/97</strain>
    </source>
</reference>
<reference key="2">
    <citation type="journal article" date="2017" name="Genome Announc.">
        <title>Updated reference genome sequence and annotation of Mycobacterium bovis AF2122/97.</title>
        <authorList>
            <person name="Malone K.M."/>
            <person name="Farrell D."/>
            <person name="Stuber T.P."/>
            <person name="Schubert O.T."/>
            <person name="Aebersold R."/>
            <person name="Robbe-Austerman S."/>
            <person name="Gordon S.V."/>
        </authorList>
    </citation>
    <scope>NUCLEOTIDE SEQUENCE [LARGE SCALE GENOMIC DNA]</scope>
    <scope>GENOME REANNOTATION</scope>
    <source>
        <strain>ATCC BAA-935 / AF2122/97</strain>
    </source>
</reference>
<evidence type="ECO:0000250" key="1"/>
<evidence type="ECO:0000305" key="2"/>
<name>PHSG_MYCBO</name>
<organism>
    <name type="scientific">Mycobacterium bovis (strain ATCC BAA-935 / AF2122/97)</name>
    <dbReference type="NCBI Taxonomy" id="233413"/>
    <lineage>
        <taxon>Bacteria</taxon>
        <taxon>Bacillati</taxon>
        <taxon>Actinomycetota</taxon>
        <taxon>Actinomycetes</taxon>
        <taxon>Mycobacteriales</taxon>
        <taxon>Mycobacteriaceae</taxon>
        <taxon>Mycobacterium</taxon>
        <taxon>Mycobacterium tuberculosis complex</taxon>
    </lineage>
</organism>
<sequence length="863" mass="95521">MKALRRFTVRAHLPERLAALDQLSTNLRWSWDKPTQDLFAAIDPALWEQCGHDPVALLGAVNPARLDELALDAEFLGALDELAADLNDYLSRPLWYQEQQDAGVAAQALPTGIAYFSLEFGVAEVLPNYSGGLGILAGDHLKSASDLGVPLIAVGLYYRSGYFRQSLTADGWQHETYPSLDPQGLPLRLLTDANGDPVLVEVALGDNAVLRARIWVAQVGRVPLLLLDSDIPENEHDLRNVTDRLYGGDQEHRIKQEILAGIGGVRAIRAYTAVEKLTPPEVFHMNEGHAGFLGIERIRELVTDAGLDFDTALTVVRSSTVFTTHTPVPAGIDRFPLEMVQRYVNDQRGDGRSRLLPGLPADRIVALGAEDDPAKFNMAHMGLRLAQRANGVSLLHGRVSRAMFNELWAGFDPDEVPIGSVTNGVHAPTWAAPQWLQLGRELAGSDSLREPVVWQRLHQVDPAHLWWIRSQLRSMLVEDVRARLRQSWLERGATDAELGWIATAFDPNVLTVGFARRVPTYKRLTLMLRDPGRLEQLLLDEQRPIQLIVAGKSHPADDGGKALIQQVVRFADRPQFRHRIAFLPNYDMSMARLLYWGCDVWLNNPLRPLEACGTSGMKSALNGGLNLSIRDGWWDEWYDGENGWEIPSADGVADENRRDDLEAGALYDLLAQAVAPKFYERDERGVPQRWVEMVRHTLQTLGPKVLASRMVRDYVEHYYAPAAQSFRRTAGAQFDAARELADYRRRAEEAWPKIEIADVDSTGLPDTPLLGSQLTLTATVRLAGLRPNDVTVQGVLGRVDSGDVLMDPVTVEMAHTGTGDGGYEIFSTTTPLPLAGPVGYTVRVLPRHPMLAASNELGLVTLA</sequence>
<dbReference type="EC" id="2.4.1.1"/>
<dbReference type="EMBL" id="LT708304">
    <property type="protein sequence ID" value="SIT99966.1"/>
    <property type="molecule type" value="Genomic_DNA"/>
</dbReference>
<dbReference type="RefSeq" id="NP_855017.1">
    <property type="nucleotide sequence ID" value="NC_002945.3"/>
</dbReference>
<dbReference type="RefSeq" id="WP_010950525.1">
    <property type="nucleotide sequence ID" value="NC_002945.4"/>
</dbReference>
<dbReference type="SMR" id="Q7U078"/>
<dbReference type="KEGG" id="mbo:BQ2027_MB1363"/>
<dbReference type="PATRIC" id="fig|233413.5.peg.1495"/>
<dbReference type="Proteomes" id="UP000001419">
    <property type="component" value="Chromosome"/>
</dbReference>
<dbReference type="GO" id="GO:0008184">
    <property type="term" value="F:glycogen phosphorylase activity"/>
    <property type="evidence" value="ECO:0007669"/>
    <property type="project" value="InterPro"/>
</dbReference>
<dbReference type="GO" id="GO:0030170">
    <property type="term" value="F:pyridoxal phosphate binding"/>
    <property type="evidence" value="ECO:0007669"/>
    <property type="project" value="InterPro"/>
</dbReference>
<dbReference type="GO" id="GO:0005977">
    <property type="term" value="P:glycogen metabolic process"/>
    <property type="evidence" value="ECO:0007669"/>
    <property type="project" value="UniProtKB-KW"/>
</dbReference>
<dbReference type="CDD" id="cd04299">
    <property type="entry name" value="GT35_Glycogen_Phosphorylase-like"/>
    <property type="match status" value="1"/>
</dbReference>
<dbReference type="FunFam" id="3.40.50.2000:FF:000341">
    <property type="entry name" value="Glycogen phosphorylase"/>
    <property type="match status" value="1"/>
</dbReference>
<dbReference type="Gene3D" id="3.40.50.2000">
    <property type="entry name" value="Glycogen Phosphorylase B"/>
    <property type="match status" value="3"/>
</dbReference>
<dbReference type="InterPro" id="IPR011834">
    <property type="entry name" value="Agluc_phsphrylas"/>
</dbReference>
<dbReference type="InterPro" id="IPR000811">
    <property type="entry name" value="Glyco_trans_35"/>
</dbReference>
<dbReference type="InterPro" id="IPR052182">
    <property type="entry name" value="Glycogen/Maltodextrin_Phosph"/>
</dbReference>
<dbReference type="InterPro" id="IPR024517">
    <property type="entry name" value="Glycogen_phosphorylase_DUF3417"/>
</dbReference>
<dbReference type="InterPro" id="IPR035090">
    <property type="entry name" value="Pyridoxal_P_attach_site"/>
</dbReference>
<dbReference type="NCBIfam" id="TIGR02094">
    <property type="entry name" value="more_P_ylases"/>
    <property type="match status" value="1"/>
</dbReference>
<dbReference type="PANTHER" id="PTHR42655">
    <property type="entry name" value="GLYCOGEN PHOSPHORYLASE"/>
    <property type="match status" value="1"/>
</dbReference>
<dbReference type="PANTHER" id="PTHR42655:SF1">
    <property type="entry name" value="GLYCOGEN PHOSPHORYLASE"/>
    <property type="match status" value="1"/>
</dbReference>
<dbReference type="Pfam" id="PF11897">
    <property type="entry name" value="DUF3417"/>
    <property type="match status" value="1"/>
</dbReference>
<dbReference type="Pfam" id="PF00343">
    <property type="entry name" value="Phosphorylase"/>
    <property type="match status" value="1"/>
</dbReference>
<dbReference type="PIRSF" id="PIRSF000460">
    <property type="entry name" value="Pprylas_GlgP"/>
    <property type="match status" value="1"/>
</dbReference>
<dbReference type="SUPFAM" id="SSF53756">
    <property type="entry name" value="UDP-Glycosyltransferase/glycogen phosphorylase"/>
    <property type="match status" value="1"/>
</dbReference>
<dbReference type="PROSITE" id="PS00102">
    <property type="entry name" value="PHOSPHORYLASE"/>
    <property type="match status" value="1"/>
</dbReference>
<protein>
    <recommendedName>
        <fullName>Glycogen phosphorylase</fullName>
        <ecNumber>2.4.1.1</ecNumber>
    </recommendedName>
</protein>
<gene>
    <name type="primary">glgP</name>
    <name type="ordered locus">BQ2027_MB1363</name>
</gene>
<feature type="chain" id="PRO_0000188555" description="Glycogen phosphorylase">
    <location>
        <begin position="1"/>
        <end position="863"/>
    </location>
</feature>
<feature type="modified residue" description="N6-(pyridoxal phosphate)lysine" evidence="1">
    <location>
        <position position="618"/>
    </location>
</feature>
<accession>Q7U078</accession>
<accession>A0A1R3XYE1</accession>
<accession>X2BI15</accession>